<name>MURC_HALHL</name>
<sequence length="486" mass="51325">MADGVPAREPRFTAPMDGRSTFGRVRRIHFVGIGGAGMGGIAEVLHNLGFTITGSDVRSGAVVERLVGLGVTVQIGHDPVHVQGMDAVVVSTAVTEDNPEVQAARQQRIPVVPRAEMLAELMRFRHGVAVAGTHGKTTTTSLLASCLAEGELDPTFVIGGRLISAGAHARLGAGPYLVAEADESDASFLHLKPMMAAVTNVDADHLGTYGGDFEALRRTFIEFLHHLPFYGLAVLCIDDPEVRRLRGEIGRPVLTYGFSEDADVRVSGMEADGHRTRFRIEEGDGAAFAVELSLPGRHNVLNAAAAIALARELGVDVAAIQRALSSFQGIGRRFQVYPDIPLAEGAAALVDDYAHHPRELEATLQAARAAWPERRLVVVFQPHRYSRTRELFDDFARVLSGTDALVLTEVYAAGEARLPGADGRALASAVRDRGGAQPIFAESLDEVPGLLAGLLRDDDVVLTLGAGSIGGLPAQLGGGLTAGGGA</sequence>
<keyword id="KW-0067">ATP-binding</keyword>
<keyword id="KW-0131">Cell cycle</keyword>
<keyword id="KW-0132">Cell division</keyword>
<keyword id="KW-0133">Cell shape</keyword>
<keyword id="KW-0961">Cell wall biogenesis/degradation</keyword>
<keyword id="KW-0963">Cytoplasm</keyword>
<keyword id="KW-0436">Ligase</keyword>
<keyword id="KW-0547">Nucleotide-binding</keyword>
<keyword id="KW-0573">Peptidoglycan synthesis</keyword>
<keyword id="KW-1185">Reference proteome</keyword>
<comment type="function">
    <text evidence="1">Cell wall formation.</text>
</comment>
<comment type="catalytic activity">
    <reaction evidence="1">
        <text>UDP-N-acetyl-alpha-D-muramate + L-alanine + ATP = UDP-N-acetyl-alpha-D-muramoyl-L-alanine + ADP + phosphate + H(+)</text>
        <dbReference type="Rhea" id="RHEA:23372"/>
        <dbReference type="ChEBI" id="CHEBI:15378"/>
        <dbReference type="ChEBI" id="CHEBI:30616"/>
        <dbReference type="ChEBI" id="CHEBI:43474"/>
        <dbReference type="ChEBI" id="CHEBI:57972"/>
        <dbReference type="ChEBI" id="CHEBI:70757"/>
        <dbReference type="ChEBI" id="CHEBI:83898"/>
        <dbReference type="ChEBI" id="CHEBI:456216"/>
        <dbReference type="EC" id="6.3.2.8"/>
    </reaction>
</comment>
<comment type="pathway">
    <text evidence="1">Cell wall biogenesis; peptidoglycan biosynthesis.</text>
</comment>
<comment type="subcellular location">
    <subcellularLocation>
        <location evidence="1">Cytoplasm</location>
    </subcellularLocation>
</comment>
<comment type="similarity">
    <text evidence="1">Belongs to the MurCDEF family.</text>
</comment>
<evidence type="ECO:0000255" key="1">
    <source>
        <dbReference type="HAMAP-Rule" id="MF_00046"/>
    </source>
</evidence>
<proteinExistence type="inferred from homology"/>
<organism>
    <name type="scientific">Halorhodospira halophila (strain DSM 244 / SL1)</name>
    <name type="common">Ectothiorhodospira halophila (strain DSM 244 / SL1)</name>
    <dbReference type="NCBI Taxonomy" id="349124"/>
    <lineage>
        <taxon>Bacteria</taxon>
        <taxon>Pseudomonadati</taxon>
        <taxon>Pseudomonadota</taxon>
        <taxon>Gammaproteobacteria</taxon>
        <taxon>Chromatiales</taxon>
        <taxon>Ectothiorhodospiraceae</taxon>
        <taxon>Halorhodospira</taxon>
    </lineage>
</organism>
<feature type="chain" id="PRO_0000336836" description="UDP-N-acetylmuramate--L-alanine ligase">
    <location>
        <begin position="1"/>
        <end position="486"/>
    </location>
</feature>
<feature type="binding site" evidence="1">
    <location>
        <begin position="132"/>
        <end position="138"/>
    </location>
    <ligand>
        <name>ATP</name>
        <dbReference type="ChEBI" id="CHEBI:30616"/>
    </ligand>
</feature>
<protein>
    <recommendedName>
        <fullName evidence="1">UDP-N-acetylmuramate--L-alanine ligase</fullName>
        <ecNumber evidence="1">6.3.2.8</ecNumber>
    </recommendedName>
    <alternativeName>
        <fullName evidence="1">UDP-N-acetylmuramoyl-L-alanine synthetase</fullName>
    </alternativeName>
</protein>
<accession>A1WYU2</accession>
<reference key="1">
    <citation type="submission" date="2006-12" db="EMBL/GenBank/DDBJ databases">
        <title>Complete sequence of Halorhodospira halophila SL1.</title>
        <authorList>
            <consortium name="US DOE Joint Genome Institute"/>
            <person name="Copeland A."/>
            <person name="Lucas S."/>
            <person name="Lapidus A."/>
            <person name="Barry K."/>
            <person name="Detter J.C."/>
            <person name="Glavina del Rio T."/>
            <person name="Hammon N."/>
            <person name="Israni S."/>
            <person name="Dalin E."/>
            <person name="Tice H."/>
            <person name="Pitluck S."/>
            <person name="Saunders E."/>
            <person name="Brettin T."/>
            <person name="Bruce D."/>
            <person name="Han C."/>
            <person name="Tapia R."/>
            <person name="Schmutz J."/>
            <person name="Larimer F."/>
            <person name="Land M."/>
            <person name="Hauser L."/>
            <person name="Kyrpides N."/>
            <person name="Mikhailova N."/>
            <person name="Hoff W."/>
            <person name="Richardson P."/>
        </authorList>
    </citation>
    <scope>NUCLEOTIDE SEQUENCE [LARGE SCALE GENOMIC DNA]</scope>
    <source>
        <strain>DSM 244 / SL1</strain>
    </source>
</reference>
<dbReference type="EC" id="6.3.2.8" evidence="1"/>
<dbReference type="EMBL" id="CP000544">
    <property type="protein sequence ID" value="ABM62854.1"/>
    <property type="molecule type" value="Genomic_DNA"/>
</dbReference>
<dbReference type="SMR" id="A1WYU2"/>
<dbReference type="STRING" id="349124.Hhal_2090"/>
<dbReference type="KEGG" id="hha:Hhal_2090"/>
<dbReference type="eggNOG" id="COG0773">
    <property type="taxonomic scope" value="Bacteria"/>
</dbReference>
<dbReference type="HOGENOM" id="CLU_028104_2_2_6"/>
<dbReference type="UniPathway" id="UPA00219"/>
<dbReference type="Proteomes" id="UP000000647">
    <property type="component" value="Chromosome"/>
</dbReference>
<dbReference type="GO" id="GO:0005737">
    <property type="term" value="C:cytoplasm"/>
    <property type="evidence" value="ECO:0007669"/>
    <property type="project" value="UniProtKB-SubCell"/>
</dbReference>
<dbReference type="GO" id="GO:0005524">
    <property type="term" value="F:ATP binding"/>
    <property type="evidence" value="ECO:0007669"/>
    <property type="project" value="UniProtKB-UniRule"/>
</dbReference>
<dbReference type="GO" id="GO:0008763">
    <property type="term" value="F:UDP-N-acetylmuramate-L-alanine ligase activity"/>
    <property type="evidence" value="ECO:0007669"/>
    <property type="project" value="UniProtKB-UniRule"/>
</dbReference>
<dbReference type="GO" id="GO:0051301">
    <property type="term" value="P:cell division"/>
    <property type="evidence" value="ECO:0007669"/>
    <property type="project" value="UniProtKB-KW"/>
</dbReference>
<dbReference type="GO" id="GO:0071555">
    <property type="term" value="P:cell wall organization"/>
    <property type="evidence" value="ECO:0007669"/>
    <property type="project" value="UniProtKB-KW"/>
</dbReference>
<dbReference type="GO" id="GO:0009252">
    <property type="term" value="P:peptidoglycan biosynthetic process"/>
    <property type="evidence" value="ECO:0007669"/>
    <property type="project" value="UniProtKB-UniRule"/>
</dbReference>
<dbReference type="GO" id="GO:0008360">
    <property type="term" value="P:regulation of cell shape"/>
    <property type="evidence" value="ECO:0007669"/>
    <property type="project" value="UniProtKB-KW"/>
</dbReference>
<dbReference type="FunFam" id="3.40.1190.10:FF:000001">
    <property type="entry name" value="UDP-N-acetylmuramate--L-alanine ligase"/>
    <property type="match status" value="1"/>
</dbReference>
<dbReference type="Gene3D" id="3.90.190.20">
    <property type="entry name" value="Mur ligase, C-terminal domain"/>
    <property type="match status" value="1"/>
</dbReference>
<dbReference type="Gene3D" id="3.40.1190.10">
    <property type="entry name" value="Mur-like, catalytic domain"/>
    <property type="match status" value="1"/>
</dbReference>
<dbReference type="Gene3D" id="3.40.50.720">
    <property type="entry name" value="NAD(P)-binding Rossmann-like Domain"/>
    <property type="match status" value="1"/>
</dbReference>
<dbReference type="HAMAP" id="MF_00046">
    <property type="entry name" value="MurC"/>
    <property type="match status" value="1"/>
</dbReference>
<dbReference type="InterPro" id="IPR036565">
    <property type="entry name" value="Mur-like_cat_sf"/>
</dbReference>
<dbReference type="InterPro" id="IPR004101">
    <property type="entry name" value="Mur_ligase_C"/>
</dbReference>
<dbReference type="InterPro" id="IPR036615">
    <property type="entry name" value="Mur_ligase_C_dom_sf"/>
</dbReference>
<dbReference type="InterPro" id="IPR013221">
    <property type="entry name" value="Mur_ligase_cen"/>
</dbReference>
<dbReference type="InterPro" id="IPR000713">
    <property type="entry name" value="Mur_ligase_N"/>
</dbReference>
<dbReference type="InterPro" id="IPR050061">
    <property type="entry name" value="MurCDEF_pg_biosynth"/>
</dbReference>
<dbReference type="InterPro" id="IPR005758">
    <property type="entry name" value="UDP-N-AcMur_Ala_ligase_MurC"/>
</dbReference>
<dbReference type="NCBIfam" id="TIGR01082">
    <property type="entry name" value="murC"/>
    <property type="match status" value="1"/>
</dbReference>
<dbReference type="PANTHER" id="PTHR43445:SF3">
    <property type="entry name" value="UDP-N-ACETYLMURAMATE--L-ALANINE LIGASE"/>
    <property type="match status" value="1"/>
</dbReference>
<dbReference type="PANTHER" id="PTHR43445">
    <property type="entry name" value="UDP-N-ACETYLMURAMATE--L-ALANINE LIGASE-RELATED"/>
    <property type="match status" value="1"/>
</dbReference>
<dbReference type="Pfam" id="PF01225">
    <property type="entry name" value="Mur_ligase"/>
    <property type="match status" value="1"/>
</dbReference>
<dbReference type="Pfam" id="PF02875">
    <property type="entry name" value="Mur_ligase_C"/>
    <property type="match status" value="1"/>
</dbReference>
<dbReference type="Pfam" id="PF08245">
    <property type="entry name" value="Mur_ligase_M"/>
    <property type="match status" value="1"/>
</dbReference>
<dbReference type="SUPFAM" id="SSF51984">
    <property type="entry name" value="MurCD N-terminal domain"/>
    <property type="match status" value="1"/>
</dbReference>
<dbReference type="SUPFAM" id="SSF53623">
    <property type="entry name" value="MurD-like peptide ligases, catalytic domain"/>
    <property type="match status" value="1"/>
</dbReference>
<dbReference type="SUPFAM" id="SSF53244">
    <property type="entry name" value="MurD-like peptide ligases, peptide-binding domain"/>
    <property type="match status" value="1"/>
</dbReference>
<gene>
    <name evidence="1" type="primary">murC</name>
    <name type="ordered locus">Hhal_2090</name>
</gene>